<name>FB27_ARATH</name>
<reference key="1">
    <citation type="journal article" date="2000" name="Nature">
        <title>Sequence and analysis of chromosome 1 of the plant Arabidopsis thaliana.</title>
        <authorList>
            <person name="Theologis A."/>
            <person name="Ecker J.R."/>
            <person name="Palm C.J."/>
            <person name="Federspiel N.A."/>
            <person name="Kaul S."/>
            <person name="White O."/>
            <person name="Alonso J."/>
            <person name="Altafi H."/>
            <person name="Araujo R."/>
            <person name="Bowman C.L."/>
            <person name="Brooks S.Y."/>
            <person name="Buehler E."/>
            <person name="Chan A."/>
            <person name="Chao Q."/>
            <person name="Chen H."/>
            <person name="Cheuk R.F."/>
            <person name="Chin C.W."/>
            <person name="Chung M.K."/>
            <person name="Conn L."/>
            <person name="Conway A.B."/>
            <person name="Conway A.R."/>
            <person name="Creasy T.H."/>
            <person name="Dewar K."/>
            <person name="Dunn P."/>
            <person name="Etgu P."/>
            <person name="Feldblyum T.V."/>
            <person name="Feng J.-D."/>
            <person name="Fong B."/>
            <person name="Fujii C.Y."/>
            <person name="Gill J.E."/>
            <person name="Goldsmith A.D."/>
            <person name="Haas B."/>
            <person name="Hansen N.F."/>
            <person name="Hughes B."/>
            <person name="Huizar L."/>
            <person name="Hunter J.L."/>
            <person name="Jenkins J."/>
            <person name="Johnson-Hopson C."/>
            <person name="Khan S."/>
            <person name="Khaykin E."/>
            <person name="Kim C.J."/>
            <person name="Koo H.L."/>
            <person name="Kremenetskaia I."/>
            <person name="Kurtz D.B."/>
            <person name="Kwan A."/>
            <person name="Lam B."/>
            <person name="Langin-Hooper S."/>
            <person name="Lee A."/>
            <person name="Lee J.M."/>
            <person name="Lenz C.A."/>
            <person name="Li J.H."/>
            <person name="Li Y.-P."/>
            <person name="Lin X."/>
            <person name="Liu S.X."/>
            <person name="Liu Z.A."/>
            <person name="Luros J.S."/>
            <person name="Maiti R."/>
            <person name="Marziali A."/>
            <person name="Militscher J."/>
            <person name="Miranda M."/>
            <person name="Nguyen M."/>
            <person name="Nierman W.C."/>
            <person name="Osborne B.I."/>
            <person name="Pai G."/>
            <person name="Peterson J."/>
            <person name="Pham P.K."/>
            <person name="Rizzo M."/>
            <person name="Rooney T."/>
            <person name="Rowley D."/>
            <person name="Sakano H."/>
            <person name="Salzberg S.L."/>
            <person name="Schwartz J.R."/>
            <person name="Shinn P."/>
            <person name="Southwick A.M."/>
            <person name="Sun H."/>
            <person name="Tallon L.J."/>
            <person name="Tambunga G."/>
            <person name="Toriumi M.J."/>
            <person name="Town C.D."/>
            <person name="Utterback T."/>
            <person name="Van Aken S."/>
            <person name="Vaysberg M."/>
            <person name="Vysotskaia V.S."/>
            <person name="Walker M."/>
            <person name="Wu D."/>
            <person name="Yu G."/>
            <person name="Fraser C.M."/>
            <person name="Venter J.C."/>
            <person name="Davis R.W."/>
        </authorList>
    </citation>
    <scope>NUCLEOTIDE SEQUENCE [LARGE SCALE GENOMIC DNA]</scope>
    <source>
        <strain>cv. Columbia</strain>
    </source>
</reference>
<reference key="2">
    <citation type="journal article" date="2017" name="Plant J.">
        <title>Araport11: a complete reannotation of the Arabidopsis thaliana reference genome.</title>
        <authorList>
            <person name="Cheng C.Y."/>
            <person name="Krishnakumar V."/>
            <person name="Chan A.P."/>
            <person name="Thibaud-Nissen F."/>
            <person name="Schobel S."/>
            <person name="Town C.D."/>
        </authorList>
    </citation>
    <scope>GENOME REANNOTATION</scope>
    <source>
        <strain>cv. Columbia</strain>
    </source>
</reference>
<gene>
    <name type="ordered locus">At1g31090</name>
    <name type="ORF">F28K20.3</name>
</gene>
<accession>Q9SA03</accession>
<feature type="chain" id="PRO_0000283303" description="Putative F-box protein At1g31090">
    <location>
        <begin position="1"/>
        <end position="311"/>
    </location>
</feature>
<feature type="domain" description="F-box" evidence="1">
    <location>
        <begin position="4"/>
        <end position="53"/>
    </location>
</feature>
<feature type="region of interest" description="Disordered" evidence="2">
    <location>
        <begin position="287"/>
        <end position="311"/>
    </location>
</feature>
<organism>
    <name type="scientific">Arabidopsis thaliana</name>
    <name type="common">Mouse-ear cress</name>
    <dbReference type="NCBI Taxonomy" id="3702"/>
    <lineage>
        <taxon>Eukaryota</taxon>
        <taxon>Viridiplantae</taxon>
        <taxon>Streptophyta</taxon>
        <taxon>Embryophyta</taxon>
        <taxon>Tracheophyta</taxon>
        <taxon>Spermatophyta</taxon>
        <taxon>Magnoliopsida</taxon>
        <taxon>eudicotyledons</taxon>
        <taxon>Gunneridae</taxon>
        <taxon>Pentapetalae</taxon>
        <taxon>rosids</taxon>
        <taxon>malvids</taxon>
        <taxon>Brassicales</taxon>
        <taxon>Brassicaceae</taxon>
        <taxon>Camelineae</taxon>
        <taxon>Arabidopsis</taxon>
    </lineage>
</organism>
<dbReference type="EMBL" id="AC004793">
    <property type="protein sequence ID" value="AAD21692.1"/>
    <property type="molecule type" value="Genomic_DNA"/>
</dbReference>
<dbReference type="EMBL" id="CP002684">
    <property type="protein sequence ID" value="AEE31313.1"/>
    <property type="molecule type" value="Genomic_DNA"/>
</dbReference>
<dbReference type="PIR" id="E86436">
    <property type="entry name" value="E86436"/>
</dbReference>
<dbReference type="RefSeq" id="NP_174395.1">
    <property type="nucleotide sequence ID" value="NM_102848.1"/>
</dbReference>
<dbReference type="FunCoup" id="Q9SA03">
    <property type="interactions" value="3"/>
</dbReference>
<dbReference type="iPTMnet" id="Q9SA03"/>
<dbReference type="PaxDb" id="3702-AT1G31090.1"/>
<dbReference type="EnsemblPlants" id="AT1G31090.1">
    <property type="protein sequence ID" value="AT1G31090.1"/>
    <property type="gene ID" value="AT1G31090"/>
</dbReference>
<dbReference type="GeneID" id="839995"/>
<dbReference type="Gramene" id="AT1G31090.1">
    <property type="protein sequence ID" value="AT1G31090.1"/>
    <property type="gene ID" value="AT1G31090"/>
</dbReference>
<dbReference type="KEGG" id="ath:AT1G31090"/>
<dbReference type="Araport" id="AT1G31090"/>
<dbReference type="TAIR" id="AT1G31090"/>
<dbReference type="HOGENOM" id="CLU_951088_0_0_1"/>
<dbReference type="InParanoid" id="Q9SA03"/>
<dbReference type="OMA" id="RENICPL"/>
<dbReference type="PhylomeDB" id="Q9SA03"/>
<dbReference type="PRO" id="PR:Q9SA03"/>
<dbReference type="Proteomes" id="UP000006548">
    <property type="component" value="Chromosome 1"/>
</dbReference>
<dbReference type="ExpressionAtlas" id="Q9SA03">
    <property type="expression patterns" value="baseline"/>
</dbReference>
<dbReference type="CDD" id="cd22157">
    <property type="entry name" value="F-box_AtFBW1-like"/>
    <property type="match status" value="1"/>
</dbReference>
<dbReference type="Gene3D" id="1.20.1280.50">
    <property type="match status" value="1"/>
</dbReference>
<dbReference type="InterPro" id="IPR013187">
    <property type="entry name" value="F-box-assoc_dom_typ3"/>
</dbReference>
<dbReference type="InterPro" id="IPR036047">
    <property type="entry name" value="F-box-like_dom_sf"/>
</dbReference>
<dbReference type="InterPro" id="IPR001810">
    <property type="entry name" value="F-box_dom"/>
</dbReference>
<dbReference type="PANTHER" id="PTHR31111">
    <property type="entry name" value="BNAA05G37150D PROTEIN-RELATED"/>
    <property type="match status" value="1"/>
</dbReference>
<dbReference type="PANTHER" id="PTHR31111:SF130">
    <property type="entry name" value="F-BOX ASSOCIATED UBIQUITINATION EFFECTOR FAMILY PROTEIN"/>
    <property type="match status" value="1"/>
</dbReference>
<dbReference type="Pfam" id="PF00646">
    <property type="entry name" value="F-box"/>
    <property type="match status" value="1"/>
</dbReference>
<dbReference type="Pfam" id="PF08268">
    <property type="entry name" value="FBA_3"/>
    <property type="match status" value="1"/>
</dbReference>
<dbReference type="SMART" id="SM00256">
    <property type="entry name" value="FBOX"/>
    <property type="match status" value="1"/>
</dbReference>
<dbReference type="SUPFAM" id="SSF81383">
    <property type="entry name" value="F-box domain"/>
    <property type="match status" value="1"/>
</dbReference>
<dbReference type="PROSITE" id="PS50181">
    <property type="entry name" value="FBOX"/>
    <property type="match status" value="1"/>
</dbReference>
<evidence type="ECO:0000255" key="1">
    <source>
        <dbReference type="PROSITE-ProRule" id="PRU00080"/>
    </source>
</evidence>
<evidence type="ECO:0000256" key="2">
    <source>
        <dbReference type="SAM" id="MobiDB-lite"/>
    </source>
</evidence>
<keyword id="KW-1185">Reference proteome</keyword>
<proteinExistence type="predicted"/>
<protein>
    <recommendedName>
        <fullName>Putative F-box protein At1g31090</fullName>
    </recommendedName>
</protein>
<sequence length="311" mass="36401">MNRGANSDSIPTDLIYEILSRLSVKPITRFRCVSKLWESIICRQDFTELFHNRSSSNPRLLIGVIQGGEWNFFSSPQPQNHYGKSSLVVAADSHMKFSEDKRPRYYSYASGLLYFPNIRISNHNDDVVRVICNPSTRQYAILPPDLRTRYRDSGRLFRNKLGVINLEDDYDGGYLLKLRMFVLEDFEKQKWTTYVHTLRDENKIKDNDNVYVVGATASGQIVLARNKAYKPFYVFYFNPEKSTLQSVEIQGVREEEDWFHRVYYFVDHVEDLRFDVMKTTYAATSIRPAEQNTSTSSREDHLVRTVKRKRA</sequence>